<dbReference type="GO" id="GO:0005576">
    <property type="term" value="C:extracellular region"/>
    <property type="evidence" value="ECO:0007669"/>
    <property type="project" value="UniProtKB-SubCell"/>
</dbReference>
<dbReference type="GO" id="GO:0005179">
    <property type="term" value="F:hormone activity"/>
    <property type="evidence" value="ECO:0007669"/>
    <property type="project" value="UniProtKB-KW"/>
</dbReference>
<dbReference type="GO" id="GO:0007218">
    <property type="term" value="P:neuropeptide signaling pathway"/>
    <property type="evidence" value="ECO:0007669"/>
    <property type="project" value="UniProtKB-KW"/>
</dbReference>
<dbReference type="InterPro" id="IPR002047">
    <property type="entry name" value="Adipokinetic_hormone_CS"/>
</dbReference>
<dbReference type="PROSITE" id="PS00256">
    <property type="entry name" value="AKH"/>
    <property type="match status" value="1"/>
</dbReference>
<protein>
    <recommendedName>
        <fullName evidence="1">Hypertrehalosaemic factor</fullName>
    </recommendedName>
    <alternativeName>
        <fullName evidence="4">Adipokinetic hormone 1</fullName>
        <shortName evidence="4">MasDa-AKH-1</shortName>
    </alternativeName>
    <alternativeName>
        <fullName evidence="1">Hypertrehalosaemic neuropeptide</fullName>
    </alternativeName>
</protein>
<comment type="function">
    <text evidence="5">Hypertrehalosaemic factors are neuropeptides that elevate the level of trehalose in the hemolymph (trehalose is the major carbohydrate in the hemolymph of insects).</text>
</comment>
<comment type="subcellular location">
    <subcellularLocation>
        <location evidence="5">Secreted</location>
    </subcellularLocation>
</comment>
<comment type="similarity">
    <text evidence="2">Belongs to the AKH/HRTH/RPCH family.</text>
</comment>
<reference evidence="5" key="1">
    <citation type="journal article" date="2009" name="BMC Evol. Biol.">
        <title>A proteomic approach for studying insect phylogeny: CAPA peptides of ancient insect taxa (Dictyoptera, Blattoptera) as a test case.</title>
        <authorList>
            <person name="Roth S."/>
            <person name="Fromm B."/>
            <person name="Gaede G."/>
            <person name="Predel R."/>
        </authorList>
    </citation>
    <scope>PROTEIN SEQUENCE</scope>
    <scope>PYROGLUTAMATE FORMATION AT GLN-1</scope>
    <scope>AMIDATION AT TRP-8</scope>
    <source>
        <tissue evidence="3">Corpora cardiaca</tissue>
    </source>
</reference>
<proteinExistence type="evidence at protein level"/>
<accession>P85682</accession>
<organism>
    <name type="scientific">Mastotermes darwiniensis</name>
    <name type="common">Giant northern termite</name>
    <dbReference type="NCBI Taxonomy" id="13139"/>
    <lineage>
        <taxon>Eukaryota</taxon>
        <taxon>Metazoa</taxon>
        <taxon>Ecdysozoa</taxon>
        <taxon>Arthropoda</taxon>
        <taxon>Hexapoda</taxon>
        <taxon>Insecta</taxon>
        <taxon>Pterygota</taxon>
        <taxon>Neoptera</taxon>
        <taxon>Polyneoptera</taxon>
        <taxon>Dictyoptera</taxon>
        <taxon>Blattodea</taxon>
        <taxon>Blattoidea</taxon>
        <taxon>Termitoidae</taxon>
        <taxon>Mastotermitidae</taxon>
        <taxon>Mastotermes</taxon>
    </lineage>
</organism>
<evidence type="ECO:0000250" key="1">
    <source>
        <dbReference type="UniProtKB" id="P67790"/>
    </source>
</evidence>
<evidence type="ECO:0000255" key="2"/>
<evidence type="ECO:0000269" key="3">
    <source>
    </source>
</evidence>
<evidence type="ECO:0000303" key="4">
    <source>
    </source>
</evidence>
<evidence type="ECO:0000305" key="5"/>
<sequence length="8" mass="991">QVNFSPNW</sequence>
<keyword id="KW-0027">Amidation</keyword>
<keyword id="KW-0903">Direct protein sequencing</keyword>
<keyword id="KW-0372">Hormone</keyword>
<keyword id="KW-0527">Neuropeptide</keyword>
<keyword id="KW-0873">Pyrrolidone carboxylic acid</keyword>
<keyword id="KW-0964">Secreted</keyword>
<feature type="peptide" id="PRO_0000378657" description="Hypertrehalosaemic factor" evidence="3">
    <location>
        <begin position="1"/>
        <end position="8"/>
    </location>
</feature>
<feature type="modified residue" description="Pyrrolidone carboxylic acid" evidence="3">
    <location>
        <position position="1"/>
    </location>
</feature>
<feature type="modified residue" description="Tryptophan amide" evidence="3">
    <location>
        <position position="8"/>
    </location>
</feature>
<name>HTF_MASDA</name>